<dbReference type="EMBL" id="AP009373">
    <property type="protein sequence ID" value="BAF50407.1"/>
    <property type="molecule type" value="Genomic_DNA"/>
</dbReference>
<dbReference type="RefSeq" id="YP_001123583.1">
    <property type="nucleotide sequence ID" value="NC_009272.1"/>
</dbReference>
<dbReference type="SMR" id="A4QL52"/>
<dbReference type="GeneID" id="4964680"/>
<dbReference type="GO" id="GO:0009507">
    <property type="term" value="C:chloroplast"/>
    <property type="evidence" value="ECO:0007669"/>
    <property type="project" value="UniProtKB-SubCell"/>
</dbReference>
<dbReference type="GO" id="GO:1990904">
    <property type="term" value="C:ribonucleoprotein complex"/>
    <property type="evidence" value="ECO:0007669"/>
    <property type="project" value="UniProtKB-KW"/>
</dbReference>
<dbReference type="GO" id="GO:0005840">
    <property type="term" value="C:ribosome"/>
    <property type="evidence" value="ECO:0007669"/>
    <property type="project" value="UniProtKB-KW"/>
</dbReference>
<dbReference type="GO" id="GO:0019843">
    <property type="term" value="F:rRNA binding"/>
    <property type="evidence" value="ECO:0007669"/>
    <property type="project" value="UniProtKB-UniRule"/>
</dbReference>
<dbReference type="GO" id="GO:0003735">
    <property type="term" value="F:structural constituent of ribosome"/>
    <property type="evidence" value="ECO:0007669"/>
    <property type="project" value="InterPro"/>
</dbReference>
<dbReference type="GO" id="GO:0006412">
    <property type="term" value="P:translation"/>
    <property type="evidence" value="ECO:0007669"/>
    <property type="project" value="UniProtKB-UniRule"/>
</dbReference>
<dbReference type="FunFam" id="3.30.420.80:FF:000003">
    <property type="entry name" value="30S ribosomal protein S11, chloroplastic"/>
    <property type="match status" value="1"/>
</dbReference>
<dbReference type="Gene3D" id="3.30.420.80">
    <property type="entry name" value="Ribosomal protein S11"/>
    <property type="match status" value="1"/>
</dbReference>
<dbReference type="HAMAP" id="MF_01310">
    <property type="entry name" value="Ribosomal_uS11"/>
    <property type="match status" value="1"/>
</dbReference>
<dbReference type="InterPro" id="IPR001971">
    <property type="entry name" value="Ribosomal_uS11"/>
</dbReference>
<dbReference type="InterPro" id="IPR019981">
    <property type="entry name" value="Ribosomal_uS11_bac-type"/>
</dbReference>
<dbReference type="InterPro" id="IPR018102">
    <property type="entry name" value="Ribosomal_uS11_CS"/>
</dbReference>
<dbReference type="InterPro" id="IPR036967">
    <property type="entry name" value="Ribosomal_uS11_sf"/>
</dbReference>
<dbReference type="NCBIfam" id="NF003698">
    <property type="entry name" value="PRK05309.1"/>
    <property type="match status" value="1"/>
</dbReference>
<dbReference type="NCBIfam" id="TIGR03632">
    <property type="entry name" value="uS11_bact"/>
    <property type="match status" value="1"/>
</dbReference>
<dbReference type="PANTHER" id="PTHR11759">
    <property type="entry name" value="40S RIBOSOMAL PROTEIN S14/30S RIBOSOMAL PROTEIN S11"/>
    <property type="match status" value="1"/>
</dbReference>
<dbReference type="Pfam" id="PF00411">
    <property type="entry name" value="Ribosomal_S11"/>
    <property type="match status" value="1"/>
</dbReference>
<dbReference type="PIRSF" id="PIRSF002131">
    <property type="entry name" value="Ribosomal_S11"/>
    <property type="match status" value="1"/>
</dbReference>
<dbReference type="SUPFAM" id="SSF53137">
    <property type="entry name" value="Translational machinery components"/>
    <property type="match status" value="1"/>
</dbReference>
<dbReference type="PROSITE" id="PS00054">
    <property type="entry name" value="RIBOSOMAL_S11"/>
    <property type="match status" value="1"/>
</dbReference>
<gene>
    <name evidence="1" type="primary">rps11</name>
</gene>
<evidence type="ECO:0000255" key="1">
    <source>
        <dbReference type="HAMAP-Rule" id="MF_01310"/>
    </source>
</evidence>
<evidence type="ECO:0000256" key="2">
    <source>
        <dbReference type="SAM" id="MobiDB-lite"/>
    </source>
</evidence>
<evidence type="ECO:0000305" key="3"/>
<geneLocation type="chloroplast"/>
<sequence>MAKPILRVGSRKNTRSASRKNVRKIPKGVIHVQASFNNTIVTVTDVRGRVISWSSAGTCGFRGTRRGTPFAAQTAAGNAIRAVVDQGMQRAEVRIKGPGLGRDAALRAIRRSGILLSFVRDVTPMPHNGCRPPKKRRV</sequence>
<protein>
    <recommendedName>
        <fullName evidence="1">Small ribosomal subunit protein uS11c</fullName>
    </recommendedName>
    <alternativeName>
        <fullName evidence="3">30S ribosomal protein S11, chloroplastic</fullName>
    </alternativeName>
</protein>
<accession>A4QL52</accession>
<comment type="subunit">
    <text evidence="1">Part of the 30S ribosomal subunit.</text>
</comment>
<comment type="subcellular location">
    <subcellularLocation>
        <location>Plastid</location>
        <location>Chloroplast</location>
    </subcellularLocation>
</comment>
<comment type="similarity">
    <text evidence="1">Belongs to the universal ribosomal protein uS11 family.</text>
</comment>
<name>RR11_DRANE</name>
<feature type="chain" id="PRO_0000294916" description="Small ribosomal subunit protein uS11c">
    <location>
        <begin position="1"/>
        <end position="138"/>
    </location>
</feature>
<feature type="region of interest" description="Disordered" evidence="2">
    <location>
        <begin position="1"/>
        <end position="22"/>
    </location>
</feature>
<feature type="compositionally biased region" description="Basic residues" evidence="2">
    <location>
        <begin position="9"/>
        <end position="22"/>
    </location>
</feature>
<proteinExistence type="inferred from homology"/>
<reference key="1">
    <citation type="submission" date="2007-03" db="EMBL/GenBank/DDBJ databases">
        <title>Sequencing analysis of Draba nemoroza chloroplast DNA.</title>
        <authorList>
            <person name="Hosouchi T."/>
            <person name="Tsuruoka H."/>
            <person name="Kotani H."/>
        </authorList>
    </citation>
    <scope>NUCLEOTIDE SEQUENCE [LARGE SCALE GENOMIC DNA]</scope>
</reference>
<organism>
    <name type="scientific">Draba nemorosa</name>
    <name type="common">Woodland whitlowgrass</name>
    <dbReference type="NCBI Taxonomy" id="171822"/>
    <lineage>
        <taxon>Eukaryota</taxon>
        <taxon>Viridiplantae</taxon>
        <taxon>Streptophyta</taxon>
        <taxon>Embryophyta</taxon>
        <taxon>Tracheophyta</taxon>
        <taxon>Spermatophyta</taxon>
        <taxon>Magnoliopsida</taxon>
        <taxon>eudicotyledons</taxon>
        <taxon>Gunneridae</taxon>
        <taxon>Pentapetalae</taxon>
        <taxon>rosids</taxon>
        <taxon>malvids</taxon>
        <taxon>Brassicales</taxon>
        <taxon>Brassicaceae</taxon>
        <taxon>Arabideae</taxon>
        <taxon>Draba</taxon>
    </lineage>
</organism>
<keyword id="KW-0150">Chloroplast</keyword>
<keyword id="KW-0934">Plastid</keyword>
<keyword id="KW-0687">Ribonucleoprotein</keyword>
<keyword id="KW-0689">Ribosomal protein</keyword>
<keyword id="KW-0694">RNA-binding</keyword>
<keyword id="KW-0699">rRNA-binding</keyword>